<reference key="1">
    <citation type="journal article" date="2008" name="Proc. Natl. Acad. Sci. U.S.A.">
        <title>The genome sequence of Bifidobacterium longum subsp. infantis reveals adaptations for milk utilization within the infant microbiome.</title>
        <authorList>
            <person name="Sela D.A."/>
            <person name="Chapman J."/>
            <person name="Adeuya A."/>
            <person name="Kim J.H."/>
            <person name="Chen F."/>
            <person name="Whitehead T.R."/>
            <person name="Lapidus A."/>
            <person name="Rokhsar D.S."/>
            <person name="Lebrilla C.B."/>
            <person name="German J.B."/>
            <person name="Price N.P."/>
            <person name="Richardson P.M."/>
            <person name="Mills D.A."/>
        </authorList>
    </citation>
    <scope>NUCLEOTIDE SEQUENCE [LARGE SCALE GENOMIC DNA]</scope>
    <source>
        <strain>ATCC 15697 / DSM 20088 / JCM 1222 / NCTC 11817 / S12</strain>
    </source>
</reference>
<reference key="2">
    <citation type="journal article" date="2011" name="Nature">
        <title>Bifidobacteria can protect from enteropathogenic infection through production of acetate.</title>
        <authorList>
            <person name="Fukuda S."/>
            <person name="Toh H."/>
            <person name="Hase K."/>
            <person name="Oshima K."/>
            <person name="Nakanishi Y."/>
            <person name="Yoshimura K."/>
            <person name="Tobe T."/>
            <person name="Clarke J.M."/>
            <person name="Topping D.L."/>
            <person name="Suzuki T."/>
            <person name="Taylor T.D."/>
            <person name="Itoh K."/>
            <person name="Kikuchi J."/>
            <person name="Morita H."/>
            <person name="Hattori M."/>
            <person name="Ohno H."/>
        </authorList>
    </citation>
    <scope>NUCLEOTIDE SEQUENCE [LARGE SCALE GENOMIC DNA]</scope>
    <source>
        <strain>ATCC 15697 / DSM 20088 / JCM 1222 / NCTC 11817 / S12</strain>
    </source>
</reference>
<accession>B7GNB3</accession>
<accession>E8MN57</accession>
<gene>
    <name evidence="1" type="primary">rplQ</name>
    <name type="ordered locus">Blon_2210</name>
    <name type="ordered locus">BLIJ_2283</name>
</gene>
<evidence type="ECO:0000255" key="1">
    <source>
        <dbReference type="HAMAP-Rule" id="MF_01368"/>
    </source>
</evidence>
<evidence type="ECO:0000256" key="2">
    <source>
        <dbReference type="SAM" id="MobiDB-lite"/>
    </source>
</evidence>
<evidence type="ECO:0000305" key="3"/>
<feature type="chain" id="PRO_1000184001" description="Large ribosomal subunit protein bL17">
    <location>
        <begin position="1"/>
        <end position="173"/>
    </location>
</feature>
<feature type="region of interest" description="Disordered" evidence="2">
    <location>
        <begin position="136"/>
        <end position="173"/>
    </location>
</feature>
<feature type="compositionally biased region" description="Acidic residues" evidence="2">
    <location>
        <begin position="138"/>
        <end position="149"/>
    </location>
</feature>
<feature type="compositionally biased region" description="Low complexity" evidence="2">
    <location>
        <begin position="150"/>
        <end position="166"/>
    </location>
</feature>
<sequence length="173" mass="18721">MPTPKKGPRLASSPAHERLMLANMATSLFQNGRITTTLPKAKRLRPLAERLITFAKRGDLHSRRRVMRVIRNKSVVHILFTQIAEQMEQREGGYTRIVKIAPRVGDAAPAAVIELVTEPVAKKAVVKEAEAAAKVAEEEAPAVEAEATEATEAPVEEAAAVEAEAPADAEKAE</sequence>
<proteinExistence type="inferred from homology"/>
<dbReference type="EMBL" id="CP001095">
    <property type="protein sequence ID" value="ACJ53269.1"/>
    <property type="molecule type" value="Genomic_DNA"/>
</dbReference>
<dbReference type="EMBL" id="AP010889">
    <property type="protein sequence ID" value="BAJ69860.1"/>
    <property type="molecule type" value="Genomic_DNA"/>
</dbReference>
<dbReference type="RefSeq" id="WP_012578465.1">
    <property type="nucleotide sequence ID" value="NZ_JDTT01000039.1"/>
</dbReference>
<dbReference type="SMR" id="B7GNB3"/>
<dbReference type="KEGG" id="bln:Blon_2210"/>
<dbReference type="KEGG" id="blon:BLIJ_2283"/>
<dbReference type="PATRIC" id="fig|391904.8.peg.2285"/>
<dbReference type="HOGENOM" id="CLU_074407_0_0_11"/>
<dbReference type="Proteomes" id="UP000001360">
    <property type="component" value="Chromosome"/>
</dbReference>
<dbReference type="GO" id="GO:0022625">
    <property type="term" value="C:cytosolic large ribosomal subunit"/>
    <property type="evidence" value="ECO:0007669"/>
    <property type="project" value="TreeGrafter"/>
</dbReference>
<dbReference type="GO" id="GO:0003735">
    <property type="term" value="F:structural constituent of ribosome"/>
    <property type="evidence" value="ECO:0007669"/>
    <property type="project" value="InterPro"/>
</dbReference>
<dbReference type="GO" id="GO:0006412">
    <property type="term" value="P:translation"/>
    <property type="evidence" value="ECO:0007669"/>
    <property type="project" value="UniProtKB-UniRule"/>
</dbReference>
<dbReference type="FunFam" id="3.90.1030.10:FF:000001">
    <property type="entry name" value="50S ribosomal protein L17"/>
    <property type="match status" value="1"/>
</dbReference>
<dbReference type="Gene3D" id="3.90.1030.10">
    <property type="entry name" value="Ribosomal protein L17"/>
    <property type="match status" value="1"/>
</dbReference>
<dbReference type="HAMAP" id="MF_01368">
    <property type="entry name" value="Ribosomal_bL17"/>
    <property type="match status" value="1"/>
</dbReference>
<dbReference type="InterPro" id="IPR000456">
    <property type="entry name" value="Ribosomal_bL17"/>
</dbReference>
<dbReference type="InterPro" id="IPR047859">
    <property type="entry name" value="Ribosomal_bL17_CS"/>
</dbReference>
<dbReference type="InterPro" id="IPR036373">
    <property type="entry name" value="Ribosomal_bL17_sf"/>
</dbReference>
<dbReference type="NCBIfam" id="TIGR00059">
    <property type="entry name" value="L17"/>
    <property type="match status" value="1"/>
</dbReference>
<dbReference type="PANTHER" id="PTHR14413:SF16">
    <property type="entry name" value="LARGE RIBOSOMAL SUBUNIT PROTEIN BL17M"/>
    <property type="match status" value="1"/>
</dbReference>
<dbReference type="PANTHER" id="PTHR14413">
    <property type="entry name" value="RIBOSOMAL PROTEIN L17"/>
    <property type="match status" value="1"/>
</dbReference>
<dbReference type="Pfam" id="PF01196">
    <property type="entry name" value="Ribosomal_L17"/>
    <property type="match status" value="1"/>
</dbReference>
<dbReference type="SUPFAM" id="SSF64263">
    <property type="entry name" value="Prokaryotic ribosomal protein L17"/>
    <property type="match status" value="1"/>
</dbReference>
<dbReference type="PROSITE" id="PS01167">
    <property type="entry name" value="RIBOSOMAL_L17"/>
    <property type="match status" value="1"/>
</dbReference>
<organism>
    <name type="scientific">Bifidobacterium longum subsp. infantis (strain ATCC 15697 / DSM 20088 / JCM 1222 / NCTC 11817 / S12)</name>
    <dbReference type="NCBI Taxonomy" id="391904"/>
    <lineage>
        <taxon>Bacteria</taxon>
        <taxon>Bacillati</taxon>
        <taxon>Actinomycetota</taxon>
        <taxon>Actinomycetes</taxon>
        <taxon>Bifidobacteriales</taxon>
        <taxon>Bifidobacteriaceae</taxon>
        <taxon>Bifidobacterium</taxon>
    </lineage>
</organism>
<name>RL17_BIFLS</name>
<keyword id="KW-0687">Ribonucleoprotein</keyword>
<keyword id="KW-0689">Ribosomal protein</keyword>
<comment type="subunit">
    <text evidence="1">Part of the 50S ribosomal subunit. Contacts protein L32.</text>
</comment>
<comment type="similarity">
    <text evidence="1">Belongs to the bacterial ribosomal protein bL17 family.</text>
</comment>
<protein>
    <recommendedName>
        <fullName evidence="1">Large ribosomal subunit protein bL17</fullName>
    </recommendedName>
    <alternativeName>
        <fullName evidence="3">50S ribosomal protein L17</fullName>
    </alternativeName>
</protein>